<sequence>MCGRTACTLAPDDVSKACSYQDKQGRQKCPKWRDGDTDKYQPSYNKSPQSNNPVLLSLKHFQKDADSSERVLAAMRWGLIPSWFNELDPSKMQYKTNNCRSDTITEKALYKAPLFKGRRCVVLADGFYEWKRQDGEKQPYYIYFPQIKSEKFPEEQDMMDWNGQRLLTMAGLFDCWEPPSGGEPLYSYTVITVDSSKTMNCIHDRMPAILDGDEAIRKWLDFGEVSTQDALKLIHPIENITYHPVSTVVNNSRNNSTECIAAVILTQKKGPALSASSKKMLEWLQNKSPKKEESRSIIQSPKLSQFGAPPKKTSAGLMQQWLKKEDGEPSPKRAKK</sequence>
<organism>
    <name type="scientific">Xenopus laevis</name>
    <name type="common">African clawed frog</name>
    <dbReference type="NCBI Taxonomy" id="8355"/>
    <lineage>
        <taxon>Eukaryota</taxon>
        <taxon>Metazoa</taxon>
        <taxon>Chordata</taxon>
        <taxon>Craniata</taxon>
        <taxon>Vertebrata</taxon>
        <taxon>Euteleostomi</taxon>
        <taxon>Amphibia</taxon>
        <taxon>Batrachia</taxon>
        <taxon>Anura</taxon>
        <taxon>Pipoidea</taxon>
        <taxon>Pipidae</taxon>
        <taxon>Xenopodinae</taxon>
        <taxon>Xenopus</taxon>
        <taxon>Xenopus</taxon>
    </lineage>
</organism>
<evidence type="ECO:0000250" key="1">
    <source>
        <dbReference type="UniProtKB" id="P76318"/>
    </source>
</evidence>
<evidence type="ECO:0000250" key="2">
    <source>
        <dbReference type="UniProtKB" id="Q8R1M0"/>
    </source>
</evidence>
<evidence type="ECO:0000250" key="3">
    <source>
        <dbReference type="UniProtKB" id="Q96FZ2"/>
    </source>
</evidence>
<evidence type="ECO:0000256" key="4">
    <source>
        <dbReference type="SAM" id="MobiDB-lite"/>
    </source>
</evidence>
<evidence type="ECO:0000269" key="5">
    <source>
    </source>
</evidence>
<evidence type="ECO:0000269" key="6">
    <source>
    </source>
</evidence>
<evidence type="ECO:0000269" key="7">
    <source>
    </source>
</evidence>
<evidence type="ECO:0000269" key="8">
    <source>
    </source>
</evidence>
<evidence type="ECO:0000305" key="9"/>
<evidence type="ECO:0000305" key="10">
    <source>
    </source>
</evidence>
<reference key="1">
    <citation type="submission" date="2004-06" db="EMBL/GenBank/DDBJ databases">
        <authorList>
            <consortium name="NIH - Xenopus Gene Collection (XGC) project"/>
        </authorList>
    </citation>
    <scope>NUCLEOTIDE SEQUENCE [LARGE SCALE MRNA]</scope>
    <source>
        <tissue>Oocyte</tissue>
    </source>
</reference>
<reference key="2">
    <citation type="journal article" date="2021" name="Mol. Cell">
        <title>The ubiquitin ligase RFWD3 is required for translesion DNA synthesis.</title>
        <authorList>
            <person name="Gallina I."/>
            <person name="Hendriks I.A."/>
            <person name="Hoffmann S."/>
            <person name="Larsen N.B."/>
            <person name="Johansen J."/>
            <person name="Colding-Christensen C.S."/>
            <person name="Schubert L."/>
            <person name="Selles-Baiget S."/>
            <person name="Fabian Z."/>
            <person name="Kuehbacher U."/>
            <person name="Gao A.O."/>
            <person name="Raeschle M."/>
            <person name="Rasmussen S."/>
            <person name="Nielsen M.L."/>
            <person name="Mailand N."/>
            <person name="Duxin J.P."/>
        </authorList>
    </citation>
    <scope>UBIQUITINATION</scope>
</reference>
<reference key="3">
    <citation type="journal article" date="2022" name="Nat. Struct. Mol. Biol.">
        <title>The HMCES DNA-protein cross-link functions as an intermediate in DNA interstrand cross-link repair.</title>
        <authorList>
            <person name="Semlow D.R."/>
            <person name="MacKrell V.A."/>
            <person name="Walter J.C."/>
        </authorList>
    </citation>
    <scope>FUNCTION</scope>
</reference>
<reference key="4">
    <citation type="journal article" date="2023" name="Mol. Cell">
        <title>The FANCJ helicase unfolds DNA-protein crosslinks to promote their repair.</title>
        <authorList>
            <person name="Yaneva D."/>
            <person name="Sparks J.L."/>
            <person name="Donsbach M."/>
            <person name="Zhao S."/>
            <person name="Weickert P."/>
            <person name="Bezalel-Buch R."/>
            <person name="Stingele J."/>
            <person name="Walter J.C."/>
        </authorList>
    </citation>
    <scope>FUNCTION</scope>
</reference>
<reference key="5">
    <citation type="journal article" date="2023" name="EMBO J.">
        <title>A non-proteolytic release mechanism for HMCES-DNA-protein crosslinks.</title>
        <authorList>
            <person name="Donsbach M."/>
            <person name="Duerauer S."/>
            <person name="Gruenert F."/>
            <person name="Nguyen K.T."/>
            <person name="Nigam R."/>
            <person name="Yaneva D."/>
            <person name="Weickert P."/>
            <person name="Bezalel-Buch R."/>
            <person name="Semlow D.R."/>
            <person name="Stingele J."/>
        </authorList>
    </citation>
    <scope>FUNCTION</scope>
    <scope>ACTIVE SITE</scope>
    <scope>MUTAGENESIS OF GLU-129</scope>
</reference>
<feature type="initiator methionine" description="Removed" evidence="2">
    <location>
        <position position="1"/>
    </location>
</feature>
<feature type="chain" id="PRO_0000164399" description="Abasic site processing protein HMCES">
    <location>
        <begin position="2"/>
        <end position="336"/>
    </location>
</feature>
<feature type="region of interest" description="Disordered" evidence="4">
    <location>
        <begin position="26"/>
        <end position="51"/>
    </location>
</feature>
<feature type="region of interest" description="Disordered" evidence="4">
    <location>
        <begin position="285"/>
        <end position="336"/>
    </location>
</feature>
<feature type="compositionally biased region" description="Polar residues" evidence="4">
    <location>
        <begin position="40"/>
        <end position="51"/>
    </location>
</feature>
<feature type="compositionally biased region" description="Basic and acidic residues" evidence="4">
    <location>
        <begin position="322"/>
        <end position="336"/>
    </location>
</feature>
<feature type="active site" description="Nucleophile" evidence="3">
    <location>
        <position position="2"/>
    </location>
</feature>
<feature type="active site" evidence="10">
    <location>
        <position position="129"/>
    </location>
</feature>
<feature type="site" description="Required for sensing abasic sites" evidence="1">
    <location>
        <position position="129"/>
    </location>
</feature>
<feature type="site" description="Required to stabilize abasic sites" evidence="1">
    <location>
        <position position="203"/>
    </location>
</feature>
<feature type="modified residue" description="Thiazolidine linkage to a ring-opened DNA abasic site" evidence="3">
    <location>
        <position position="2"/>
    </location>
</feature>
<feature type="mutagenesis site" description="Abolished ability to mediate self-reversal of covalent cross-link with DNA." evidence="8">
    <original>E</original>
    <variation>A</variation>
    <location>
        <position position="129"/>
    </location>
</feature>
<dbReference type="EC" id="4.-.-.-" evidence="3"/>
<dbReference type="EC" id="3.4.-.-" evidence="2"/>
<dbReference type="EMBL" id="BC072347">
    <property type="protein sequence ID" value="AAH72347.1"/>
    <property type="molecule type" value="mRNA"/>
</dbReference>
<dbReference type="RefSeq" id="NP_001085145.1">
    <property type="nucleotide sequence ID" value="NM_001091676.1"/>
</dbReference>
<dbReference type="SMR" id="Q6IND6"/>
<dbReference type="DNASU" id="432224"/>
<dbReference type="GeneID" id="432224"/>
<dbReference type="KEGG" id="xla:432224"/>
<dbReference type="AGR" id="Xenbase:XB-GENE-6255746"/>
<dbReference type="CTD" id="432224"/>
<dbReference type="Xenbase" id="XB-GENE-6255746">
    <property type="gene designation" value="hmces.L"/>
</dbReference>
<dbReference type="OrthoDB" id="2111841at2759"/>
<dbReference type="Proteomes" id="UP000186698">
    <property type="component" value="Chromosome 4L"/>
</dbReference>
<dbReference type="Bgee" id="432224">
    <property type="expression patterns" value="Expressed in testis and 19 other cell types or tissues"/>
</dbReference>
<dbReference type="GO" id="GO:0005657">
    <property type="term" value="C:replication fork"/>
    <property type="evidence" value="ECO:0000250"/>
    <property type="project" value="UniProtKB"/>
</dbReference>
<dbReference type="GO" id="GO:0140431">
    <property type="term" value="F:DNA-(abasic site) binding"/>
    <property type="evidence" value="ECO:0000314"/>
    <property type="project" value="UniProtKB"/>
</dbReference>
<dbReference type="GO" id="GO:0008233">
    <property type="term" value="F:peptidase activity"/>
    <property type="evidence" value="ECO:0007669"/>
    <property type="project" value="UniProtKB-KW"/>
</dbReference>
<dbReference type="GO" id="GO:0160129">
    <property type="term" value="F:protein-DNA covalent cross-linking activity"/>
    <property type="evidence" value="ECO:0000250"/>
    <property type="project" value="UniProtKB"/>
</dbReference>
<dbReference type="GO" id="GO:0003697">
    <property type="term" value="F:single-stranded DNA binding"/>
    <property type="evidence" value="ECO:0000250"/>
    <property type="project" value="UniProtKB"/>
</dbReference>
<dbReference type="GO" id="GO:0006974">
    <property type="term" value="P:DNA damage response"/>
    <property type="evidence" value="ECO:0000250"/>
    <property type="project" value="UniProtKB"/>
</dbReference>
<dbReference type="GO" id="GO:0036297">
    <property type="term" value="P:interstrand cross-link repair"/>
    <property type="evidence" value="ECO:0000314"/>
    <property type="project" value="UniProtKB"/>
</dbReference>
<dbReference type="GO" id="GO:0045830">
    <property type="term" value="P:positive regulation of isotype switching"/>
    <property type="evidence" value="ECO:0000250"/>
    <property type="project" value="UniProtKB"/>
</dbReference>
<dbReference type="GO" id="GO:0106300">
    <property type="term" value="P:protein-DNA covalent cross-linking repair"/>
    <property type="evidence" value="ECO:0000250"/>
    <property type="project" value="UniProtKB"/>
</dbReference>
<dbReference type="GO" id="GO:0006508">
    <property type="term" value="P:proteolysis"/>
    <property type="evidence" value="ECO:0007669"/>
    <property type="project" value="UniProtKB-KW"/>
</dbReference>
<dbReference type="Gene3D" id="3.90.1680.10">
    <property type="entry name" value="SOS response associated peptidase-like"/>
    <property type="match status" value="1"/>
</dbReference>
<dbReference type="InterPro" id="IPR003738">
    <property type="entry name" value="SRAP"/>
</dbReference>
<dbReference type="InterPro" id="IPR036590">
    <property type="entry name" value="SRAP-like"/>
</dbReference>
<dbReference type="PANTHER" id="PTHR13604:SF0">
    <property type="entry name" value="ABASIC SITE PROCESSING PROTEIN HMCES"/>
    <property type="match status" value="1"/>
</dbReference>
<dbReference type="PANTHER" id="PTHR13604">
    <property type="entry name" value="DC12-RELATED"/>
    <property type="match status" value="1"/>
</dbReference>
<dbReference type="Pfam" id="PF02586">
    <property type="entry name" value="SRAP"/>
    <property type="match status" value="1"/>
</dbReference>
<dbReference type="SUPFAM" id="SSF143081">
    <property type="entry name" value="BB1717-like"/>
    <property type="match status" value="1"/>
</dbReference>
<comment type="function">
    <text evidence="2 3 6 7 8">Sensor of abasic sites in single-stranded DNA (ssDNA) required to preserve genome integrity by promoting error-free repair of abasic sites (By similarity). Acts as an enzyme that recognizes and binds abasic sites in ssDNA at replication forks and chemically modifies the lesion by forming a covalent cross-link with DNA: forms a stable thiazolidine linkage between a ring-opened abasic site and the alpha-amino and sulfhydryl substituents of its N-terminal catalytic cysteine residue (By similarity). The hmces DNA-protein cross-link is then either reversed or degraded (PubMed:35534579, PubMed:36608669, PubMed:37519246). Hmces is able to catalyze the reversal of its thiazolidine cross-link and cycle between a cross-link and a non-cross-linked state depending on DNA context: mediates self-reversal of the thiazolidine cross-link in double stranded DNA, allowing apex1 to initiate downstream repair of abasic sites (PubMed:37519246). The hmces DNA-protein cross-link can also be degraded by the sprtn metalloprotease following unfolding by the brip1/fancj helicase (PubMed:35534579, PubMed:36608669). Promotes error-free repair of abasic sites by protecting abasic sites from translesion synthesis (TLS) polymerases and endonucleases that are error-prone and would generate mutations and double-strand breaks (By similarity). Acts as a protease: mediates autocatalytic processing of its N-terminal methionine in order to expose the catalytic cysteine (By similarity). The HMCES DNA-protein cross-link is then either reversed or degraded (By similarity). According to a model, the HMCES DNA-protein cross-link (By similarity).</text>
</comment>
<comment type="activity regulation">
    <text evidence="3">Formation and reversal of DNA-protein cross-link depends on DNA context. Catalyzes formation of the thiazolidine linkage in presence of abasic sites in single-stranded DNA. Mediates the reversal of the thiazolidine cross-link in presence of double stranded DNA.</text>
</comment>
<comment type="subcellular location">
    <subcellularLocation>
        <location evidence="3">Chromosome</location>
    </subcellularLocation>
    <text evidence="3">Recruited to chromatin following DNA damage. Localizes to replication forks.</text>
</comment>
<comment type="domain">
    <text evidence="1 3">The N-terminal catalytic Cys-2 residue forms a thiazolidine linkage to a ring-opened DNA abasic site. Glu-129 catalyzes reversal of the thiazolidine linkage; self-reversal is favoured by duplex DNA formation (By similarity). Glu-129 is also involved in sensing abasic sites in single-stranded DNA (ssDNA). His-203 stabilizes the abasic sites by forming a hydrogen bond with the O4' hydroxyl group (By similarity).</text>
</comment>
<comment type="PTM">
    <text evidence="5">Ubiquitination of the hmces DNA-protein cross-link by rfwd3 may promotes its degradation.</text>
</comment>
<comment type="similarity">
    <text evidence="9">Belongs to the SOS response-associated peptidase family.</text>
</comment>
<proteinExistence type="evidence at protein level"/>
<name>HMCES_XENLA</name>
<gene>
    <name evidence="3" type="primary">hmces</name>
    <name evidence="3" type="synonym">srapd1</name>
</gene>
<keyword id="KW-0068">Autocatalytic cleavage</keyword>
<keyword id="KW-0158">Chromosome</keyword>
<keyword id="KW-0190">Covalent protein-DNA linkage</keyword>
<keyword id="KW-0227">DNA damage</keyword>
<keyword id="KW-0238">DNA-binding</keyword>
<keyword id="KW-0378">Hydrolase</keyword>
<keyword id="KW-0456">Lyase</keyword>
<keyword id="KW-0645">Protease</keyword>
<keyword id="KW-1185">Reference proteome</keyword>
<keyword id="KW-0832">Ubl conjugation</keyword>
<accession>Q6IND6</accession>
<protein>
    <recommendedName>
        <fullName evidence="9">Abasic site processing protein HMCES</fullName>
        <ecNumber evidence="3">4.-.-.-</ecNumber>
    </recommendedName>
    <alternativeName>
        <fullName>Embryonic stem cell-specific 5-hydroxymethylcytosine-binding protein</fullName>
        <shortName evidence="3">ES cell-specific 5hmC-binding protein</shortName>
    </alternativeName>
    <alternativeName>
        <fullName evidence="2">Peptidase HMCES</fullName>
        <ecNumber evidence="2">3.4.-.-</ecNumber>
    </alternativeName>
    <alternativeName>
        <fullName evidence="3">SRAP domain-containing protein 1</fullName>
    </alternativeName>
</protein>